<proteinExistence type="evidence at protein level"/>
<keyword id="KW-0444">Lipid biosynthesis</keyword>
<keyword id="KW-0443">Lipid metabolism</keyword>
<keyword id="KW-0520">NAD</keyword>
<keyword id="KW-0521">NADP</keyword>
<keyword id="KW-0560">Oxidoreductase</keyword>
<keyword id="KW-1185">Reference proteome</keyword>
<keyword id="KW-0752">Steroid biosynthesis</keyword>
<keyword id="KW-0753">Steroid metabolism</keyword>
<keyword id="KW-0756">Sterol biosynthesis</keyword>
<keyword id="KW-1207">Sterol metabolism</keyword>
<comment type="function">
    <text evidence="1">Participates in the biosynthesis of bacterial sterols (PubMed:29784781). Together with SdmA, removes one methyl group from the C-4 position of 4,4-dimethylated steroid molecules (PubMed:29784781). SdmB catalyzes an oxidative decarboxylation that results in reduction of the 3beta-hydroxy group at the C-3 carbon to an oxo group (PubMed:29784781). It also functions as a ketoreductase that converts the C-3 oxo group back to a hydroxyl group after C-4 demethylation (PubMed:29784781).</text>
</comment>
<comment type="catalytic activity">
    <reaction evidence="1">
        <text>a 3beta-hydroxy-4alpha-methylsteroid-4beta-carboxylate + NAD(+) = a 4alpha-methyl-3-oxosteroid + CO2 + NADH</text>
        <dbReference type="Rhea" id="RHEA:60084"/>
        <dbReference type="ChEBI" id="CHEBI:16526"/>
        <dbReference type="ChEBI" id="CHEBI:57540"/>
        <dbReference type="ChEBI" id="CHEBI:57945"/>
        <dbReference type="ChEBI" id="CHEBI:143569"/>
        <dbReference type="ChEBI" id="CHEBI:143570"/>
        <dbReference type="EC" id="1.1.1.417"/>
    </reaction>
</comment>
<comment type="catalytic activity">
    <reaction evidence="1">
        <text>a 3beta-hydroxy-4alpha-methylsteroid-4beta-carboxylate + NADP(+) = a 4alpha-methyl-3-oxosteroid + CO2 + NADPH</text>
        <dbReference type="Rhea" id="RHEA:60088"/>
        <dbReference type="ChEBI" id="CHEBI:16526"/>
        <dbReference type="ChEBI" id="CHEBI:57783"/>
        <dbReference type="ChEBI" id="CHEBI:58349"/>
        <dbReference type="ChEBI" id="CHEBI:143569"/>
        <dbReference type="ChEBI" id="CHEBI:143570"/>
        <dbReference type="EC" id="1.1.1.417"/>
    </reaction>
</comment>
<comment type="catalytic activity">
    <reaction evidence="1">
        <text>4beta-carboxy-4alpha-methyl-5alpha-cholesta-8,24-dien-3beta-ol + NAD(+) = 3-dehydro-4alpha-methylzymosterol + CO2 + NADH</text>
        <dbReference type="Rhea" id="RHEA:60092"/>
        <dbReference type="ChEBI" id="CHEBI:16526"/>
        <dbReference type="ChEBI" id="CHEBI:57540"/>
        <dbReference type="ChEBI" id="CHEBI:57945"/>
        <dbReference type="ChEBI" id="CHEBI:136486"/>
        <dbReference type="ChEBI" id="CHEBI:143574"/>
        <dbReference type="EC" id="1.1.1.417"/>
    </reaction>
</comment>
<comment type="catalytic activity">
    <reaction evidence="1">
        <text>4beta-carboxy-4alpha-methyl-5alpha-cholesta-8,24-dien-3beta-ol + NADP(+) = 3-dehydro-4alpha-methylzymosterol + CO2 + NADPH</text>
        <dbReference type="Rhea" id="RHEA:60096"/>
        <dbReference type="ChEBI" id="CHEBI:16526"/>
        <dbReference type="ChEBI" id="CHEBI:57783"/>
        <dbReference type="ChEBI" id="CHEBI:58349"/>
        <dbReference type="ChEBI" id="CHEBI:136486"/>
        <dbReference type="ChEBI" id="CHEBI:143574"/>
        <dbReference type="EC" id="1.1.1.417"/>
    </reaction>
</comment>
<comment type="catalytic activity">
    <reaction evidence="1">
        <text>3-dehydro-4alpha-methylzymosterol + NADPH + H(+) = 4alpha-methylzymosterol + NADP(+)</text>
        <dbReference type="Rhea" id="RHEA:36379"/>
        <dbReference type="ChEBI" id="CHEBI:1949"/>
        <dbReference type="ChEBI" id="CHEBI:15378"/>
        <dbReference type="ChEBI" id="CHEBI:57783"/>
        <dbReference type="ChEBI" id="CHEBI:58349"/>
        <dbReference type="ChEBI" id="CHEBI:136486"/>
        <dbReference type="EC" id="1.1.1.270"/>
    </reaction>
</comment>
<comment type="pathway">
    <text evidence="4">Steroid biosynthesis; sterol biosynthesis.</text>
</comment>
<comment type="disruption phenotype">
    <text evidence="1">Deletion of sdmA and sdmB results in complete loss of sterol C-4 demethylation.</text>
</comment>
<comment type="similarity">
    <text evidence="3">Belongs to the NAD(P)-dependent epimerase/dehydratase family.</text>
</comment>
<organism>
    <name type="scientific">Methylococcus capsulatus (strain ATCC 33009 / NCIMB 11132 / Bath)</name>
    <dbReference type="NCBI Taxonomy" id="243233"/>
    <lineage>
        <taxon>Bacteria</taxon>
        <taxon>Pseudomonadati</taxon>
        <taxon>Pseudomonadota</taxon>
        <taxon>Gammaproteobacteria</taxon>
        <taxon>Methylococcales</taxon>
        <taxon>Methylococcaceae</taxon>
        <taxon>Methylococcus</taxon>
    </lineage>
</organism>
<evidence type="ECO:0000269" key="1">
    <source>
    </source>
</evidence>
<evidence type="ECO:0000303" key="2">
    <source>
    </source>
</evidence>
<evidence type="ECO:0000305" key="3"/>
<evidence type="ECO:0000305" key="4">
    <source>
    </source>
</evidence>
<evidence type="ECO:0000312" key="5">
    <source>
        <dbReference type="EMBL" id="AAU92908.1"/>
    </source>
</evidence>
<gene>
    <name evidence="2" type="primary">sdmB</name>
    <name evidence="5" type="ordered locus">MCA1017</name>
</gene>
<feature type="chain" id="PRO_0000456754" description="Sterol demethylase protein B">
    <location>
        <begin position="1"/>
        <end position="328"/>
    </location>
</feature>
<name>SDMB_METCA</name>
<sequence length="328" mass="36654">MTTLVTGATGHLGANLVRALLARGEKVRAFIRRQSDVAALDGLAVERAYGDLRDRRSIRDALEGVERLYHTAAFVSIRDGDRQELFDVNVVGTRMLMQEARRAGVRRVVHTSSFGAVGINPQGASNEHWTVSPFEPGTDYERTKAVSEHDVILEAVRGLDVTIVNPAAIVGPWDFRPSLVGRTILDFAHGRMRAFVPGAFDFVPMRDVVAVELLAMDKGIRGERYLVTGEHCTIGQILQWLEELTGHPRPRLAIPPRLMQGIALLKDPLERRFFPRRTPRFNYHSIRLLNSGKRGDSSRSRRELGLVPTSTRAAFADAVAWFRERGMI</sequence>
<reference key="1">
    <citation type="journal article" date="2004" name="PLoS Biol.">
        <title>Genomic insights into methanotrophy: the complete genome sequence of Methylococcus capsulatus (Bath).</title>
        <authorList>
            <person name="Ward N.L."/>
            <person name="Larsen O."/>
            <person name="Sakwa J."/>
            <person name="Bruseth L."/>
            <person name="Khouri H.M."/>
            <person name="Durkin A.S."/>
            <person name="Dimitrov G."/>
            <person name="Jiang L."/>
            <person name="Scanlan D."/>
            <person name="Kang K.H."/>
            <person name="Lewis M.R."/>
            <person name="Nelson K.E."/>
            <person name="Methe B.A."/>
            <person name="Wu M."/>
            <person name="Heidelberg J.F."/>
            <person name="Paulsen I.T."/>
            <person name="Fouts D.E."/>
            <person name="Ravel J."/>
            <person name="Tettelin H."/>
            <person name="Ren Q."/>
            <person name="Read T.D."/>
            <person name="DeBoy R.T."/>
            <person name="Seshadri R."/>
            <person name="Salzberg S.L."/>
            <person name="Jensen H.B."/>
            <person name="Birkeland N.K."/>
            <person name="Nelson W.C."/>
            <person name="Dodson R.J."/>
            <person name="Grindhaug S.H."/>
            <person name="Holt I.E."/>
            <person name="Eidhammer I."/>
            <person name="Jonasen I."/>
            <person name="Vanaken S."/>
            <person name="Utterback T.R."/>
            <person name="Feldblyum T.V."/>
            <person name="Fraser C.M."/>
            <person name="Lillehaug J.R."/>
            <person name="Eisen J.A."/>
        </authorList>
    </citation>
    <scope>NUCLEOTIDE SEQUENCE [LARGE SCALE GENOMIC DNA]</scope>
    <source>
        <strain>ATCC 33009 / NCIMB 11132 / Bath</strain>
    </source>
</reference>
<reference key="2">
    <citation type="journal article" date="2018" name="Proc. Natl. Acad. Sci. U.S.A.">
        <title>C-4 sterol demethylation enzymes distinguish bacterial and eukaryotic sterol synthesis.</title>
        <authorList>
            <person name="Lee A.K."/>
            <person name="Banta A.B."/>
            <person name="Wei J.H."/>
            <person name="Kiemle D.J."/>
            <person name="Feng J."/>
            <person name="Giner J.L."/>
            <person name="Welander P.V."/>
        </authorList>
    </citation>
    <scope>FUNCTION</scope>
    <scope>CATALYTIC ACTIVITY</scope>
    <scope>DISRUPTION PHENOTYPE</scope>
    <source>
        <strain>ATCC 19069</strain>
    </source>
</reference>
<dbReference type="EC" id="1.1.1.270" evidence="1"/>
<dbReference type="EC" id="1.1.1.417" evidence="1"/>
<dbReference type="EMBL" id="AE017282">
    <property type="protein sequence ID" value="AAU92908.1"/>
    <property type="molecule type" value="Genomic_DNA"/>
</dbReference>
<dbReference type="RefSeq" id="WP_010960318.1">
    <property type="nucleotide sequence ID" value="NC_002977.6"/>
</dbReference>
<dbReference type="SMR" id="Q60A54"/>
<dbReference type="STRING" id="243233.MCA1017"/>
<dbReference type="GeneID" id="88223311"/>
<dbReference type="KEGG" id="mca:MCA1017"/>
<dbReference type="eggNOG" id="COG0451">
    <property type="taxonomic scope" value="Bacteria"/>
</dbReference>
<dbReference type="HOGENOM" id="CLU_007383_6_0_6"/>
<dbReference type="BioCyc" id="MetaCyc:MONOMER-20666"/>
<dbReference type="UniPathway" id="UPA00766"/>
<dbReference type="Proteomes" id="UP000006821">
    <property type="component" value="Chromosome"/>
</dbReference>
<dbReference type="GO" id="GO:0005737">
    <property type="term" value="C:cytoplasm"/>
    <property type="evidence" value="ECO:0007669"/>
    <property type="project" value="TreeGrafter"/>
</dbReference>
<dbReference type="GO" id="GO:0004029">
    <property type="term" value="F:aldehyde dehydrogenase (NAD+) activity"/>
    <property type="evidence" value="ECO:0007669"/>
    <property type="project" value="TreeGrafter"/>
</dbReference>
<dbReference type="GO" id="GO:0016126">
    <property type="term" value="P:sterol biosynthetic process"/>
    <property type="evidence" value="ECO:0007669"/>
    <property type="project" value="UniProtKB-UniPathway"/>
</dbReference>
<dbReference type="CDD" id="cd05228">
    <property type="entry name" value="AR_FR_like_1_SDR_e"/>
    <property type="match status" value="1"/>
</dbReference>
<dbReference type="Gene3D" id="3.40.50.720">
    <property type="entry name" value="NAD(P)-binding Rossmann-like Domain"/>
    <property type="match status" value="1"/>
</dbReference>
<dbReference type="InterPro" id="IPR001509">
    <property type="entry name" value="Epimerase_deHydtase"/>
</dbReference>
<dbReference type="InterPro" id="IPR036291">
    <property type="entry name" value="NAD(P)-bd_dom_sf"/>
</dbReference>
<dbReference type="InterPro" id="IPR051783">
    <property type="entry name" value="NAD(P)-dependent_oxidoreduct"/>
</dbReference>
<dbReference type="PANTHER" id="PTHR48079:SF6">
    <property type="entry name" value="NAD(P)-BINDING DOMAIN-CONTAINING PROTEIN-RELATED"/>
    <property type="match status" value="1"/>
</dbReference>
<dbReference type="PANTHER" id="PTHR48079">
    <property type="entry name" value="PROTEIN YEEZ"/>
    <property type="match status" value="1"/>
</dbReference>
<dbReference type="Pfam" id="PF01370">
    <property type="entry name" value="Epimerase"/>
    <property type="match status" value="1"/>
</dbReference>
<dbReference type="SUPFAM" id="SSF51735">
    <property type="entry name" value="NAD(P)-binding Rossmann-fold domains"/>
    <property type="match status" value="1"/>
</dbReference>
<accession>Q60A54</accession>
<protein>
    <recommendedName>
        <fullName evidence="2">Sterol demethylase protein B</fullName>
        <ecNumber evidence="1">1.1.1.270</ecNumber>
        <ecNumber evidence="1">1.1.1.417</ecNumber>
    </recommendedName>
    <alternativeName>
        <fullName evidence="3">3beta-hydroxysteroid 3-dehydrogenase</fullName>
    </alternativeName>
    <alternativeName>
        <fullName evidence="3">3beta-hydroxysteroid-4beta-carboxylate 3-dehydrogenase (decarboxylating)</fullName>
    </alternativeName>
</protein>